<dbReference type="EC" id="1.14.14.145" evidence="3"/>
<dbReference type="EMBL" id="AY779537">
    <property type="protein sequence ID" value="AAX07431.1"/>
    <property type="molecule type" value="mRNA"/>
</dbReference>
<dbReference type="SMR" id="Q50EK6"/>
<dbReference type="KEGG" id="ag:AAX07431"/>
<dbReference type="BioCyc" id="MetaCyc:MONOMER-12739"/>
<dbReference type="BRENDA" id="1.14.14.145">
    <property type="organism ID" value="4861"/>
</dbReference>
<dbReference type="SABIO-RK" id="Q50EK6"/>
<dbReference type="GO" id="GO:0016020">
    <property type="term" value="C:membrane"/>
    <property type="evidence" value="ECO:0007669"/>
    <property type="project" value="UniProtKB-SubCell"/>
</dbReference>
<dbReference type="GO" id="GO:0036204">
    <property type="term" value="F:abieta-7,13-dien-18-ol hydroxylase activity"/>
    <property type="evidence" value="ECO:0007669"/>
    <property type="project" value="UniProtKB-EC"/>
</dbReference>
<dbReference type="GO" id="GO:0020037">
    <property type="term" value="F:heme binding"/>
    <property type="evidence" value="ECO:0007669"/>
    <property type="project" value="InterPro"/>
</dbReference>
<dbReference type="GO" id="GO:0005506">
    <property type="term" value="F:iron ion binding"/>
    <property type="evidence" value="ECO:0007669"/>
    <property type="project" value="InterPro"/>
</dbReference>
<dbReference type="GO" id="GO:0016132">
    <property type="term" value="P:brassinosteroid biosynthetic process"/>
    <property type="evidence" value="ECO:0007669"/>
    <property type="project" value="TreeGrafter"/>
</dbReference>
<dbReference type="GO" id="GO:0010268">
    <property type="term" value="P:brassinosteroid homeostasis"/>
    <property type="evidence" value="ECO:0007669"/>
    <property type="project" value="TreeGrafter"/>
</dbReference>
<dbReference type="GO" id="GO:0016125">
    <property type="term" value="P:sterol metabolic process"/>
    <property type="evidence" value="ECO:0007669"/>
    <property type="project" value="TreeGrafter"/>
</dbReference>
<dbReference type="CDD" id="cd11043">
    <property type="entry name" value="CYP90-like"/>
    <property type="match status" value="1"/>
</dbReference>
<dbReference type="Gene3D" id="1.10.630.10">
    <property type="entry name" value="Cytochrome P450"/>
    <property type="match status" value="1"/>
</dbReference>
<dbReference type="InterPro" id="IPR001128">
    <property type="entry name" value="Cyt_P450"/>
</dbReference>
<dbReference type="InterPro" id="IPR017972">
    <property type="entry name" value="Cyt_P450_CS"/>
</dbReference>
<dbReference type="InterPro" id="IPR002401">
    <property type="entry name" value="Cyt_P450_E_grp-I"/>
</dbReference>
<dbReference type="InterPro" id="IPR036396">
    <property type="entry name" value="Cyt_P450_sf"/>
</dbReference>
<dbReference type="PANTHER" id="PTHR24286">
    <property type="entry name" value="CYTOCHROME P450 26"/>
    <property type="match status" value="1"/>
</dbReference>
<dbReference type="PANTHER" id="PTHR24286:SF232">
    <property type="entry name" value="CYTOCHROME P450 SUPERFAMILY PROTEIN"/>
    <property type="match status" value="1"/>
</dbReference>
<dbReference type="Pfam" id="PF00067">
    <property type="entry name" value="p450"/>
    <property type="match status" value="1"/>
</dbReference>
<dbReference type="PRINTS" id="PR00463">
    <property type="entry name" value="EP450I"/>
</dbReference>
<dbReference type="PRINTS" id="PR00385">
    <property type="entry name" value="P450"/>
</dbReference>
<dbReference type="SUPFAM" id="SSF48264">
    <property type="entry name" value="Cytochrome P450"/>
    <property type="match status" value="1"/>
</dbReference>
<dbReference type="PROSITE" id="PS00086">
    <property type="entry name" value="CYTOCHROME_P450"/>
    <property type="match status" value="1"/>
</dbReference>
<protein>
    <recommendedName>
        <fullName>Abietadienol/abietadienal oxidase</fullName>
        <shortName>PtAO</shortName>
        <ecNumber evidence="3">1.14.14.145</ecNumber>
    </recommendedName>
    <alternativeName>
        <fullName>Cytochrome P450 720B1</fullName>
    </alternativeName>
    <alternativeName>
        <fullName>Cytochrome P450 CYPA</fullName>
    </alternativeName>
</protein>
<keyword id="KW-0349">Heme</keyword>
<keyword id="KW-0408">Iron</keyword>
<keyword id="KW-0472">Membrane</keyword>
<keyword id="KW-0479">Metal-binding</keyword>
<keyword id="KW-0503">Monooxygenase</keyword>
<keyword id="KW-0560">Oxidoreductase</keyword>
<keyword id="KW-0812">Transmembrane</keyword>
<keyword id="KW-1133">Transmembrane helix</keyword>
<organism>
    <name type="scientific">Pinus taeda</name>
    <name type="common">Loblolly pine</name>
    <dbReference type="NCBI Taxonomy" id="3352"/>
    <lineage>
        <taxon>Eukaryota</taxon>
        <taxon>Viridiplantae</taxon>
        <taxon>Streptophyta</taxon>
        <taxon>Embryophyta</taxon>
        <taxon>Tracheophyta</taxon>
        <taxon>Spermatophyta</taxon>
        <taxon>Pinopsida</taxon>
        <taxon>Pinidae</taxon>
        <taxon>Conifers I</taxon>
        <taxon>Pinales</taxon>
        <taxon>Pinaceae</taxon>
        <taxon>Pinus</taxon>
        <taxon>Pinus subgen. Pinus</taxon>
    </lineage>
</organism>
<evidence type="ECO:0000250" key="1"/>
<evidence type="ECO:0000255" key="2"/>
<evidence type="ECO:0000269" key="3">
    <source>
    </source>
</evidence>
<evidence type="ECO:0000305" key="4"/>
<feature type="chain" id="PRO_0000352514" description="Abietadienol/abietadienal oxidase">
    <location>
        <begin position="1"/>
        <end position="481"/>
    </location>
</feature>
<feature type="transmembrane region" description="Helical" evidence="2">
    <location>
        <begin position="2"/>
        <end position="22"/>
    </location>
</feature>
<feature type="binding site" description="axial binding residue" evidence="1">
    <location>
        <position position="430"/>
    </location>
    <ligand>
        <name>heme</name>
        <dbReference type="ChEBI" id="CHEBI:30413"/>
    </ligand>
    <ligandPart>
        <name>Fe</name>
        <dbReference type="ChEBI" id="CHEBI:18248"/>
    </ligandPart>
</feature>
<comment type="function">
    <text evidence="3">Multifunctional and multisubstrate cytochrome P450 that oxidizes the respective carbon 18 of abietadienol, abietadienal, levopimaradienol, isopimara-7,15-dienol, isopimara-7,15-dienal, dehydroabietadienol, and dehydroabietadienal.</text>
</comment>
<comment type="catalytic activity">
    <reaction evidence="3">
        <text>abieta-7,13-dien-18-ol + 2 reduced [NADPH--hemoprotein reductase] + 2 O2 = abieta-7,13-dien-18-oate + 2 oxidized [NADPH--hemoprotein reductase] + 3 H2O + 3 H(+)</text>
        <dbReference type="Rhea" id="RHEA:26221"/>
        <dbReference type="Rhea" id="RHEA-COMP:11964"/>
        <dbReference type="Rhea" id="RHEA-COMP:11965"/>
        <dbReference type="ChEBI" id="CHEBI:15377"/>
        <dbReference type="ChEBI" id="CHEBI:15378"/>
        <dbReference type="ChEBI" id="CHEBI:15379"/>
        <dbReference type="ChEBI" id="CHEBI:29510"/>
        <dbReference type="ChEBI" id="CHEBI:35680"/>
        <dbReference type="ChEBI" id="CHEBI:57618"/>
        <dbReference type="ChEBI" id="CHEBI:58210"/>
        <dbReference type="EC" id="1.14.14.145"/>
    </reaction>
</comment>
<comment type="cofactor">
    <cofactor evidence="1">
        <name>heme</name>
        <dbReference type="ChEBI" id="CHEBI:30413"/>
    </cofactor>
</comment>
<comment type="biophysicochemical properties">
    <kinetics>
        <KM evidence="3">0.8 uM for abietadienol</KM>
        <KM evidence="3">5.3 uM for dehydroabietadienol</KM>
        <KM evidence="3">1.5 uM for isopimaradienol</KM>
        <KM evidence="3">1.9 uM for levopimaradienol</KM>
        <KM evidence="3">0.5 uM for abietadienal</KM>
        <KM evidence="3">0.6 uM for dehydroabietadienal</KM>
        <KM evidence="3">0.6 uM for isopimaradienal</KM>
        <Vmax evidence="3">77.0 pmol/min/mg enzyme with abietadienol as substrate</Vmax>
        <Vmax evidence="3">211.0 pmol/min/mg enzyme with dehydroabietadienol as substrate</Vmax>
        <Vmax evidence="3">122.0 pmol/min/mg enzyme with isopimaradienol as substrate</Vmax>
        <Vmax evidence="3">137.0 pmol/min/mg enzyme with levopimaradienol as substrate</Vmax>
        <Vmax evidence="3">181.0 pmol/min/mg enzyme with abietadienal as substrate</Vmax>
        <Vmax evidence="3">379.0 pmol/min/mg enzyme with dehydroabietadienal as substrate</Vmax>
        <Vmax evidence="3">226.0 pmol/min/mg enzyme with isopimaradienal as substrate</Vmax>
    </kinetics>
    <phDependence>
        <text evidence="3">Optimum pH is7.5-7.6.</text>
    </phDependence>
</comment>
<comment type="subcellular location">
    <subcellularLocation>
        <location evidence="4">Membrane</location>
        <topology evidence="4">Single-pass membrane protein</topology>
    </subcellularLocation>
</comment>
<comment type="tissue specificity">
    <text evidence="3">Expressed in young tissues such as flushing buds and green bark tissues. Lower levels in mature needles and bark.</text>
</comment>
<comment type="induction">
    <text evidence="3">By methyl jasmonate.</text>
</comment>
<comment type="similarity">
    <text evidence="4">Belongs to the cytochrome P450 family.</text>
</comment>
<gene>
    <name type="primary">CYP720B1</name>
</gene>
<proteinExistence type="evidence at protein level"/>
<reference key="1">
    <citation type="journal article" date="2005" name="Proc. Natl. Acad. Sci. U.S.A.">
        <title>Loblolly pine abietadienol/abietadienal oxidase PtAO (CYP720B1) is a multifunctional, multisubstrate cytochrome P450 monooxygenase.</title>
        <authorList>
            <person name="Ro D.-K."/>
            <person name="Arimura G."/>
            <person name="Lau S.Y.W."/>
            <person name="Piers E."/>
            <person name="Bohlmann J."/>
        </authorList>
    </citation>
    <scope>NUCLEOTIDE SEQUENCE [MRNA]</scope>
    <scope>FUNCTION</scope>
    <scope>CATALYTIC ACTIVITY</scope>
    <scope>TISSUE SPECIFICITY</scope>
    <scope>INDUCTION</scope>
    <scope>BIOPHYSICOCHEMICAL PROPERTIES</scope>
</reference>
<accession>Q50EK6</accession>
<name>C72B1_PINTA</name>
<sequence length="481" mass="55702">MADQISLLLVVFTAAVALLHLIYRWWNAQRGQKRTSNEKNQELHLPPGSTGWPLIGETYSYYRSMTSNRPRQFIDDREKRYDSDVFVSHLFGSQAVISSDPQFNKYVLQNEGRFFQAHYPKALKALIGDYGLLSVHGDLQRKLHGIAVNLLRFERLKFDFMEEIQNLVHSTLDRWVDKKEIALQNECHQMVLNLMAKQLLDLSPSKETNEICELFVDYTNAVIAIPIKIPGSTYAKGLKARELLIRKISNMIKERRDHPHIVHKDLLTKLLEEDSISDEIICDFILFLLFAGHETSSRAMTFAIKFLTTCPKALTQMKEEHDAILKAKGGHKKLEWDDYKSMKFTQCVINETLRLGNFGPGVFRETKEDTKVKDCLIPKGWVVFAFLTATHLDEKFHNEALTFNPWRWELDQDVSNNHLFSPFGGGARLCPGSHLARLELALFLHIFITRFRWEALADEHPSYFPLPYLAKGFPMRLYNRE</sequence>